<comment type="function">
    <text evidence="1">Through its interaction with ARL14 and MYO1E, may connect MHC class II-containing cytoplasmic vesicles to the actin network and hence controls the movement of these vesicles along the actin cytoskeleton in dendritic cells.</text>
</comment>
<comment type="subunit">
    <text evidence="1">Interacts with ARL14 and MYO1E.</text>
</comment>
<comment type="subcellular location">
    <subcellularLocation>
        <location evidence="1">Cytoplasm</location>
    </subcellularLocation>
</comment>
<proteinExistence type="evidence at transcript level"/>
<gene>
    <name type="primary">ARL14EP</name>
    <name type="synonym">ARF7EP</name>
</gene>
<protein>
    <recommendedName>
        <fullName>ARL14 effector protein</fullName>
    </recommendedName>
    <alternativeName>
        <fullName>ARF7 effector protein</fullName>
    </alternativeName>
</protein>
<accession>Q5EA92</accession>
<accession>Q2KIN9</accession>
<organism>
    <name type="scientific">Bos taurus</name>
    <name type="common">Bovine</name>
    <dbReference type="NCBI Taxonomy" id="9913"/>
    <lineage>
        <taxon>Eukaryota</taxon>
        <taxon>Metazoa</taxon>
        <taxon>Chordata</taxon>
        <taxon>Craniata</taxon>
        <taxon>Vertebrata</taxon>
        <taxon>Euteleostomi</taxon>
        <taxon>Mammalia</taxon>
        <taxon>Eutheria</taxon>
        <taxon>Laurasiatheria</taxon>
        <taxon>Artiodactyla</taxon>
        <taxon>Ruminantia</taxon>
        <taxon>Pecora</taxon>
        <taxon>Bovidae</taxon>
        <taxon>Bovinae</taxon>
        <taxon>Bos</taxon>
    </lineage>
</organism>
<sequence length="260" mass="29209">MMDPCSVGVQLRTTNECHKTYYTRHTGFKTLQELSSNDMLLLQLRTGMTLSGNNTICFHHAKVYIDRFEDLQKSCCDPFNIHKKLAKKNLHVIDLDDATFLSAKFGRQLVPGWKLCPKCTQIINGSVDVDSEDRQKRKPDSDGRTAKALRSLQFANPGKQTEFAPETGKREKRRLTKNATAGSDRQVIPAKSKVYDSQGLLIFSGMDLCDCLDEDCLGCFYACPACGSTKCGAECRCDRKWLYEQIEIEGGEIIHNKHAG</sequence>
<dbReference type="EMBL" id="BT020677">
    <property type="protein sequence ID" value="AAX08694.1"/>
    <property type="molecule type" value="mRNA"/>
</dbReference>
<dbReference type="EMBL" id="BC112569">
    <property type="protein sequence ID" value="AAI12570.1"/>
    <property type="molecule type" value="mRNA"/>
</dbReference>
<dbReference type="RefSeq" id="NP_001026931.2">
    <property type="nucleotide sequence ID" value="NM_001031761.3"/>
</dbReference>
<dbReference type="RefSeq" id="XP_005216337.1">
    <property type="nucleotide sequence ID" value="XM_005216280.5"/>
</dbReference>
<dbReference type="RefSeq" id="XP_059730733.1">
    <property type="nucleotide sequence ID" value="XM_059874750.1"/>
</dbReference>
<dbReference type="SMR" id="Q5EA92"/>
<dbReference type="FunCoup" id="Q5EA92">
    <property type="interactions" value="2863"/>
</dbReference>
<dbReference type="STRING" id="9913.ENSBTAP00000072039"/>
<dbReference type="PaxDb" id="9913-ENSBTAP00000042134"/>
<dbReference type="Ensembl" id="ENSBTAT00000044657.2">
    <property type="protein sequence ID" value="ENSBTAP00000042134.1"/>
    <property type="gene ID" value="ENSBTAG00000012417.6"/>
</dbReference>
<dbReference type="GeneID" id="523894"/>
<dbReference type="KEGG" id="bta:523894"/>
<dbReference type="CTD" id="120534"/>
<dbReference type="VEuPathDB" id="HostDB:ENSBTAG00000012417"/>
<dbReference type="VGNC" id="VGNC:26140">
    <property type="gene designation" value="ARL14EP"/>
</dbReference>
<dbReference type="eggNOG" id="KOG4850">
    <property type="taxonomic scope" value="Eukaryota"/>
</dbReference>
<dbReference type="GeneTree" id="ENSGT00940000156586"/>
<dbReference type="HOGENOM" id="CLU_093502_0_0_1"/>
<dbReference type="InParanoid" id="Q5EA92"/>
<dbReference type="OMA" id="ECHKIYY"/>
<dbReference type="OrthoDB" id="5984406at2759"/>
<dbReference type="TreeFam" id="TF333216"/>
<dbReference type="Proteomes" id="UP000009136">
    <property type="component" value="Chromosome 15"/>
</dbReference>
<dbReference type="Bgee" id="ENSBTAG00000012417">
    <property type="expression patterns" value="Expressed in spermatid and 104 other cell types or tissues"/>
</dbReference>
<dbReference type="GO" id="GO:0005829">
    <property type="term" value="C:cytosol"/>
    <property type="evidence" value="ECO:0007669"/>
    <property type="project" value="Ensembl"/>
</dbReference>
<dbReference type="GO" id="GO:0005925">
    <property type="term" value="C:focal adhesion"/>
    <property type="evidence" value="ECO:0007669"/>
    <property type="project" value="Ensembl"/>
</dbReference>
<dbReference type="GO" id="GO:0043231">
    <property type="term" value="C:intracellular membrane-bounded organelle"/>
    <property type="evidence" value="ECO:0000318"/>
    <property type="project" value="GO_Central"/>
</dbReference>
<dbReference type="GO" id="GO:0005730">
    <property type="term" value="C:nucleolus"/>
    <property type="evidence" value="ECO:0007669"/>
    <property type="project" value="Ensembl"/>
</dbReference>
<dbReference type="GO" id="GO:0005654">
    <property type="term" value="C:nucleoplasm"/>
    <property type="evidence" value="ECO:0007669"/>
    <property type="project" value="Ensembl"/>
</dbReference>
<dbReference type="GO" id="GO:0005886">
    <property type="term" value="C:plasma membrane"/>
    <property type="evidence" value="ECO:0007669"/>
    <property type="project" value="Ensembl"/>
</dbReference>
<dbReference type="InterPro" id="IPR029264">
    <property type="entry name" value="ARF7EP_C"/>
</dbReference>
<dbReference type="PANTHER" id="PTHR46536">
    <property type="entry name" value="ARL14 EFFECTOR PROTEIN"/>
    <property type="match status" value="1"/>
</dbReference>
<dbReference type="PANTHER" id="PTHR46536:SF1">
    <property type="entry name" value="ARL14 EFFECTOR PROTEIN"/>
    <property type="match status" value="1"/>
</dbReference>
<dbReference type="Pfam" id="PF14949">
    <property type="entry name" value="ARF7EP_C"/>
    <property type="match status" value="1"/>
</dbReference>
<feature type="chain" id="PRO_0000251891" description="ARL14 effector protein">
    <location>
        <begin position="1"/>
        <end position="260"/>
    </location>
</feature>
<feature type="modified residue" description="N-acetylmethionine" evidence="2">
    <location>
        <position position="1"/>
    </location>
</feature>
<feature type="modified residue" description="Phosphoserine" evidence="2">
    <location>
        <position position="183"/>
    </location>
</feature>
<feature type="cross-link" description="Glycyl lysine isopeptide (Lys-Gly) (interchain with G-Cter in SUMO2)" evidence="2">
    <location>
        <position position="177"/>
    </location>
</feature>
<feature type="sequence conflict" description="In Ref. 2; AAI12570." evidence="3" ref="2">
    <original>I</original>
    <variation>N</variation>
    <location>
        <position position="254"/>
    </location>
</feature>
<evidence type="ECO:0000250" key="1"/>
<evidence type="ECO:0000250" key="2">
    <source>
        <dbReference type="UniProtKB" id="Q8N8R7"/>
    </source>
</evidence>
<evidence type="ECO:0000305" key="3"/>
<keyword id="KW-0007">Acetylation</keyword>
<keyword id="KW-0963">Cytoplasm</keyword>
<keyword id="KW-1017">Isopeptide bond</keyword>
<keyword id="KW-0597">Phosphoprotein</keyword>
<keyword id="KW-1185">Reference proteome</keyword>
<keyword id="KW-0832">Ubl conjugation</keyword>
<name>AL14E_BOVIN</name>
<reference key="1">
    <citation type="journal article" date="2005" name="BMC Genomics">
        <title>Characterization of 954 bovine full-CDS cDNA sequences.</title>
        <authorList>
            <person name="Harhay G.P."/>
            <person name="Sonstegard T.S."/>
            <person name="Keele J.W."/>
            <person name="Heaton M.P."/>
            <person name="Clawson M.L."/>
            <person name="Snelling W.M."/>
            <person name="Wiedmann R.T."/>
            <person name="Van Tassell C.P."/>
            <person name="Smith T.P.L."/>
        </authorList>
    </citation>
    <scope>NUCLEOTIDE SEQUENCE [LARGE SCALE MRNA]</scope>
</reference>
<reference key="2">
    <citation type="submission" date="2006-01" db="EMBL/GenBank/DDBJ databases">
        <authorList>
            <consortium name="NIH - Mammalian Gene Collection (MGC) project"/>
        </authorList>
    </citation>
    <scope>NUCLEOTIDE SEQUENCE [LARGE SCALE MRNA]</scope>
    <source>
        <strain>Hereford</strain>
        <tissue>Testis</tissue>
    </source>
</reference>